<gene>
    <name evidence="1" type="primary">valS</name>
    <name type="ordered locus">CTL0554</name>
</gene>
<name>SYV_CHLT2</name>
<feature type="chain" id="PRO_1000216262" description="Valine--tRNA ligase">
    <location>
        <begin position="1"/>
        <end position="939"/>
    </location>
</feature>
<feature type="coiled-coil region" evidence="1">
    <location>
        <begin position="874"/>
        <end position="939"/>
    </location>
</feature>
<feature type="short sequence motif" description="'HIGH' region">
    <location>
        <begin position="47"/>
        <end position="57"/>
    </location>
</feature>
<feature type="short sequence motif" description="'KMSKS' region">
    <location>
        <begin position="563"/>
        <end position="567"/>
    </location>
</feature>
<feature type="binding site" evidence="1">
    <location>
        <position position="566"/>
    </location>
    <ligand>
        <name>ATP</name>
        <dbReference type="ChEBI" id="CHEBI:30616"/>
    </ligand>
</feature>
<proteinExistence type="inferred from homology"/>
<dbReference type="EC" id="6.1.1.9" evidence="1"/>
<dbReference type="EMBL" id="AM884176">
    <property type="protein sequence ID" value="CAP03994.1"/>
    <property type="molecule type" value="Genomic_DNA"/>
</dbReference>
<dbReference type="RefSeq" id="WP_009873710.1">
    <property type="nucleotide sequence ID" value="NC_010287.1"/>
</dbReference>
<dbReference type="RefSeq" id="YP_001654630.1">
    <property type="nucleotide sequence ID" value="NC_010287.1"/>
</dbReference>
<dbReference type="SMR" id="B0B7L8"/>
<dbReference type="KEGG" id="ctb:CTL0554"/>
<dbReference type="PATRIC" id="fig|471472.4.peg.595"/>
<dbReference type="HOGENOM" id="CLU_001493_0_2_0"/>
<dbReference type="Proteomes" id="UP001154402">
    <property type="component" value="Chromosome"/>
</dbReference>
<dbReference type="GO" id="GO:0005829">
    <property type="term" value="C:cytosol"/>
    <property type="evidence" value="ECO:0007669"/>
    <property type="project" value="TreeGrafter"/>
</dbReference>
<dbReference type="GO" id="GO:0002161">
    <property type="term" value="F:aminoacyl-tRNA deacylase activity"/>
    <property type="evidence" value="ECO:0007669"/>
    <property type="project" value="InterPro"/>
</dbReference>
<dbReference type="GO" id="GO:0005524">
    <property type="term" value="F:ATP binding"/>
    <property type="evidence" value="ECO:0007669"/>
    <property type="project" value="UniProtKB-UniRule"/>
</dbReference>
<dbReference type="GO" id="GO:0004832">
    <property type="term" value="F:valine-tRNA ligase activity"/>
    <property type="evidence" value="ECO:0007669"/>
    <property type="project" value="UniProtKB-UniRule"/>
</dbReference>
<dbReference type="GO" id="GO:0006438">
    <property type="term" value="P:valyl-tRNA aminoacylation"/>
    <property type="evidence" value="ECO:0007669"/>
    <property type="project" value="UniProtKB-UniRule"/>
</dbReference>
<dbReference type="CDD" id="cd07962">
    <property type="entry name" value="Anticodon_Ia_Val"/>
    <property type="match status" value="1"/>
</dbReference>
<dbReference type="CDD" id="cd00817">
    <property type="entry name" value="ValRS_core"/>
    <property type="match status" value="1"/>
</dbReference>
<dbReference type="FunFam" id="3.40.50.620:FF:000032">
    <property type="entry name" value="Valine--tRNA ligase"/>
    <property type="match status" value="1"/>
</dbReference>
<dbReference type="FunFam" id="3.40.50.620:FF:000306">
    <property type="entry name" value="Valine--tRNA ligase"/>
    <property type="match status" value="1"/>
</dbReference>
<dbReference type="FunFam" id="3.90.740.10:FF:000010">
    <property type="entry name" value="Valine--tRNA ligase"/>
    <property type="match status" value="1"/>
</dbReference>
<dbReference type="Gene3D" id="3.40.50.620">
    <property type="entry name" value="HUPs"/>
    <property type="match status" value="2"/>
</dbReference>
<dbReference type="Gene3D" id="1.10.730.10">
    <property type="entry name" value="Isoleucyl-tRNA Synthetase, Domain 1"/>
    <property type="match status" value="1"/>
</dbReference>
<dbReference type="Gene3D" id="1.10.287.380">
    <property type="entry name" value="Valyl-tRNA synthetase, C-terminal domain"/>
    <property type="match status" value="1"/>
</dbReference>
<dbReference type="Gene3D" id="3.90.740.10">
    <property type="entry name" value="Valyl/Leucyl/Isoleucyl-tRNA synthetase, editing domain"/>
    <property type="match status" value="1"/>
</dbReference>
<dbReference type="HAMAP" id="MF_02004">
    <property type="entry name" value="Val_tRNA_synth_type1"/>
    <property type="match status" value="1"/>
</dbReference>
<dbReference type="InterPro" id="IPR001412">
    <property type="entry name" value="aa-tRNA-synth_I_CS"/>
</dbReference>
<dbReference type="InterPro" id="IPR002300">
    <property type="entry name" value="aa-tRNA-synth_Ia"/>
</dbReference>
<dbReference type="InterPro" id="IPR033705">
    <property type="entry name" value="Anticodon_Ia_Val"/>
</dbReference>
<dbReference type="InterPro" id="IPR013155">
    <property type="entry name" value="M/V/L/I-tRNA-synth_anticd-bd"/>
</dbReference>
<dbReference type="InterPro" id="IPR014729">
    <property type="entry name" value="Rossmann-like_a/b/a_fold"/>
</dbReference>
<dbReference type="InterPro" id="IPR010978">
    <property type="entry name" value="tRNA-bd_arm"/>
</dbReference>
<dbReference type="InterPro" id="IPR009080">
    <property type="entry name" value="tRNAsynth_Ia_anticodon-bd"/>
</dbReference>
<dbReference type="InterPro" id="IPR037118">
    <property type="entry name" value="Val-tRNA_synth_C_sf"/>
</dbReference>
<dbReference type="InterPro" id="IPR019499">
    <property type="entry name" value="Val-tRNA_synth_tRNA-bd"/>
</dbReference>
<dbReference type="InterPro" id="IPR009008">
    <property type="entry name" value="Val/Leu/Ile-tRNA-synth_edit"/>
</dbReference>
<dbReference type="InterPro" id="IPR002303">
    <property type="entry name" value="Valyl-tRNA_ligase"/>
</dbReference>
<dbReference type="NCBIfam" id="NF004349">
    <property type="entry name" value="PRK05729.1"/>
    <property type="match status" value="1"/>
</dbReference>
<dbReference type="NCBIfam" id="TIGR00422">
    <property type="entry name" value="valS"/>
    <property type="match status" value="1"/>
</dbReference>
<dbReference type="PANTHER" id="PTHR11946:SF93">
    <property type="entry name" value="VALINE--TRNA LIGASE, CHLOROPLASTIC_MITOCHONDRIAL 2"/>
    <property type="match status" value="1"/>
</dbReference>
<dbReference type="PANTHER" id="PTHR11946">
    <property type="entry name" value="VALYL-TRNA SYNTHETASES"/>
    <property type="match status" value="1"/>
</dbReference>
<dbReference type="Pfam" id="PF08264">
    <property type="entry name" value="Anticodon_1"/>
    <property type="match status" value="1"/>
</dbReference>
<dbReference type="Pfam" id="PF00133">
    <property type="entry name" value="tRNA-synt_1"/>
    <property type="match status" value="2"/>
</dbReference>
<dbReference type="Pfam" id="PF10458">
    <property type="entry name" value="Val_tRNA-synt_C"/>
    <property type="match status" value="1"/>
</dbReference>
<dbReference type="PRINTS" id="PR00986">
    <property type="entry name" value="TRNASYNTHVAL"/>
</dbReference>
<dbReference type="SUPFAM" id="SSF47323">
    <property type="entry name" value="Anticodon-binding domain of a subclass of class I aminoacyl-tRNA synthetases"/>
    <property type="match status" value="1"/>
</dbReference>
<dbReference type="SUPFAM" id="SSF52374">
    <property type="entry name" value="Nucleotidylyl transferase"/>
    <property type="match status" value="1"/>
</dbReference>
<dbReference type="SUPFAM" id="SSF46589">
    <property type="entry name" value="tRNA-binding arm"/>
    <property type="match status" value="1"/>
</dbReference>
<dbReference type="SUPFAM" id="SSF50677">
    <property type="entry name" value="ValRS/IleRS/LeuRS editing domain"/>
    <property type="match status" value="1"/>
</dbReference>
<dbReference type="PROSITE" id="PS00178">
    <property type="entry name" value="AA_TRNA_LIGASE_I"/>
    <property type="match status" value="1"/>
</dbReference>
<keyword id="KW-0030">Aminoacyl-tRNA synthetase</keyword>
<keyword id="KW-0067">ATP-binding</keyword>
<keyword id="KW-0175">Coiled coil</keyword>
<keyword id="KW-0963">Cytoplasm</keyword>
<keyword id="KW-0436">Ligase</keyword>
<keyword id="KW-0547">Nucleotide-binding</keyword>
<keyword id="KW-0648">Protein biosynthesis</keyword>
<reference key="1">
    <citation type="journal article" date="2008" name="Genome Res.">
        <title>Chlamydia trachomatis: genome sequence analysis of lymphogranuloma venereum isolates.</title>
        <authorList>
            <person name="Thomson N.R."/>
            <person name="Holden M.T.G."/>
            <person name="Carder C."/>
            <person name="Lennard N."/>
            <person name="Lockey S.J."/>
            <person name="Marsh P."/>
            <person name="Skipp P."/>
            <person name="O'Connor C.D."/>
            <person name="Goodhead I."/>
            <person name="Norbertzcak H."/>
            <person name="Harris B."/>
            <person name="Ormond D."/>
            <person name="Rance R."/>
            <person name="Quail M.A."/>
            <person name="Parkhill J."/>
            <person name="Stephens R.S."/>
            <person name="Clarke I.N."/>
        </authorList>
    </citation>
    <scope>NUCLEOTIDE SEQUENCE [LARGE SCALE GENOMIC DNA]</scope>
    <source>
        <strain>ATCC VR-902B / DSM 19102 / 434/Bu</strain>
    </source>
</reference>
<protein>
    <recommendedName>
        <fullName evidence="1">Valine--tRNA ligase</fullName>
        <ecNumber evidence="1">6.1.1.9</ecNumber>
    </recommendedName>
    <alternativeName>
        <fullName evidence="1">Valyl-tRNA synthetase</fullName>
        <shortName evidence="1">ValRS</shortName>
    </alternativeName>
</protein>
<sequence>MNEDQFPKAYDPKSSETGVYSFWERSGMFVANASSEKPAYSIVMPPPNVTGILHMGHALVNTLQDTLIRYKRMQGFEVCWVPGTDHAGIATQTVVERHLKASLGKRRTDFSREEFLKHVWDWKEKSQNVILSQLRQLGCSCDWSRQRFTMDPGANRAVKKAFKILFDKGVIYRGYYLVNWDPILQTALADDEVEYEERDGWLYYIRYQVVNSEEFITVATTRPETLLGDTAIAVSPEDQRYSHLIGAKVVVPFVNREIPIIGDFSVDASFGTGAVKITPAHDKDDYKTGMNHQLPMINILTSTGEINENGGIFTGLSREVARENIITSLEALGLFVKKEAYSSRVGVSYRSGAIIEPYLSKQWFVSVDSFRDSLREFVNSEEIRIFPPEFVRNYLTWVNNLKDWCISRQLWWGHRIPVWHNKHDENVICFDGEGGPEEVMRDPESWYQDPDVLDTWFSSGLWPLTCFGWPDEDSLDLKKFYPTAVLVTGHDILFFWVTRMVLMCSAMVDTEPFSDVFLHGLIFGKSYREYDEKGEWFYVSGERKRDYDKGKALPKNVVAKWEKLSKSKGNVIDPIEMIEAYGADAVRLTLCSCANRGEQIDLDYRLFEEYKNFINKLWNGARFIFGHISELTSRDLEEGVNQDLLGLEDFYILDRFNELLDLIDGHYNCYSFDKIASLAYDFFKNDLCSTYLEIIKPTLFGKQGSDQQRATKRKLLATLLINILGVLHPIVPYITETLFQKLKATLGTVENGKGDSVTGHAVSMLRSEACMVAEYPKPIHVAFPQGLRESFGIAERLVYTIRNIRGEMQLDPREPLQAFVISSEKKELVDVCIPIMCALGGVKTVEQLAEAPKDSIFSLGVVEGIQVGVILPPEHLAKERVRLEKEKTRLEKSIDSVSKLLASEDFRTRANPSLVQAKKDSLRNSQRELQSILDKLASL</sequence>
<accession>B0B7L8</accession>
<organism>
    <name type="scientific">Chlamydia trachomatis serovar L2 (strain ATCC VR-902B / DSM 19102 / 434/Bu)</name>
    <dbReference type="NCBI Taxonomy" id="471472"/>
    <lineage>
        <taxon>Bacteria</taxon>
        <taxon>Pseudomonadati</taxon>
        <taxon>Chlamydiota</taxon>
        <taxon>Chlamydiia</taxon>
        <taxon>Chlamydiales</taxon>
        <taxon>Chlamydiaceae</taxon>
        <taxon>Chlamydia/Chlamydophila group</taxon>
        <taxon>Chlamydia</taxon>
    </lineage>
</organism>
<evidence type="ECO:0000255" key="1">
    <source>
        <dbReference type="HAMAP-Rule" id="MF_02004"/>
    </source>
</evidence>
<comment type="function">
    <text evidence="1">Catalyzes the attachment of valine to tRNA(Val). As ValRS can inadvertently accommodate and process structurally similar amino acids such as threonine, to avoid such errors, it has a 'posttransfer' editing activity that hydrolyzes mischarged Thr-tRNA(Val) in a tRNA-dependent manner.</text>
</comment>
<comment type="catalytic activity">
    <reaction evidence="1">
        <text>tRNA(Val) + L-valine + ATP = L-valyl-tRNA(Val) + AMP + diphosphate</text>
        <dbReference type="Rhea" id="RHEA:10704"/>
        <dbReference type="Rhea" id="RHEA-COMP:9672"/>
        <dbReference type="Rhea" id="RHEA-COMP:9708"/>
        <dbReference type="ChEBI" id="CHEBI:30616"/>
        <dbReference type="ChEBI" id="CHEBI:33019"/>
        <dbReference type="ChEBI" id="CHEBI:57762"/>
        <dbReference type="ChEBI" id="CHEBI:78442"/>
        <dbReference type="ChEBI" id="CHEBI:78537"/>
        <dbReference type="ChEBI" id="CHEBI:456215"/>
        <dbReference type="EC" id="6.1.1.9"/>
    </reaction>
</comment>
<comment type="subunit">
    <text evidence="1">Monomer.</text>
</comment>
<comment type="subcellular location">
    <subcellularLocation>
        <location evidence="1">Cytoplasm</location>
    </subcellularLocation>
</comment>
<comment type="domain">
    <text evidence="1">ValRS has two distinct active sites: one for aminoacylation and one for editing. The misactivated threonine is translocated from the active site to the editing site.</text>
</comment>
<comment type="domain">
    <text evidence="1">The C-terminal coiled-coil domain is crucial for aminoacylation activity.</text>
</comment>
<comment type="similarity">
    <text evidence="1">Belongs to the class-I aminoacyl-tRNA synthetase family. ValS type 1 subfamily.</text>
</comment>